<dbReference type="EC" id="1.13.11.5" evidence="1"/>
<dbReference type="EMBL" id="CP000283">
    <property type="protein sequence ID" value="ABE38256.1"/>
    <property type="molecule type" value="Genomic_DNA"/>
</dbReference>
<dbReference type="SMR" id="Q13CD3"/>
<dbReference type="STRING" id="316057.RPD_1018"/>
<dbReference type="KEGG" id="rpd:RPD_1018"/>
<dbReference type="eggNOG" id="COG3508">
    <property type="taxonomic scope" value="Bacteria"/>
</dbReference>
<dbReference type="HOGENOM" id="CLU_027174_0_0_5"/>
<dbReference type="BioCyc" id="RPAL316057:RPD_RS05165-MONOMER"/>
<dbReference type="UniPathway" id="UPA00139">
    <property type="reaction ID" value="UER00339"/>
</dbReference>
<dbReference type="Proteomes" id="UP000001818">
    <property type="component" value="Chromosome"/>
</dbReference>
<dbReference type="GO" id="GO:0005737">
    <property type="term" value="C:cytoplasm"/>
    <property type="evidence" value="ECO:0007669"/>
    <property type="project" value="TreeGrafter"/>
</dbReference>
<dbReference type="GO" id="GO:0004411">
    <property type="term" value="F:homogentisate 1,2-dioxygenase activity"/>
    <property type="evidence" value="ECO:0007669"/>
    <property type="project" value="UniProtKB-UniRule"/>
</dbReference>
<dbReference type="GO" id="GO:0005506">
    <property type="term" value="F:iron ion binding"/>
    <property type="evidence" value="ECO:0007669"/>
    <property type="project" value="UniProtKB-UniRule"/>
</dbReference>
<dbReference type="GO" id="GO:0006559">
    <property type="term" value="P:L-phenylalanine catabolic process"/>
    <property type="evidence" value="ECO:0007669"/>
    <property type="project" value="UniProtKB-UniRule"/>
</dbReference>
<dbReference type="GO" id="GO:0006572">
    <property type="term" value="P:tyrosine catabolic process"/>
    <property type="evidence" value="ECO:0007669"/>
    <property type="project" value="UniProtKB-UniRule"/>
</dbReference>
<dbReference type="CDD" id="cd07000">
    <property type="entry name" value="cupin_HGO_N"/>
    <property type="match status" value="1"/>
</dbReference>
<dbReference type="FunFam" id="2.60.120.10:FF:000053">
    <property type="entry name" value="Homogentisate 1,2-dioxygenase"/>
    <property type="match status" value="1"/>
</dbReference>
<dbReference type="Gene3D" id="2.60.120.10">
    <property type="entry name" value="Jelly Rolls"/>
    <property type="match status" value="1"/>
</dbReference>
<dbReference type="HAMAP" id="MF_00334">
    <property type="entry name" value="Homogentis_dioxygen"/>
    <property type="match status" value="1"/>
</dbReference>
<dbReference type="InterPro" id="IPR046451">
    <property type="entry name" value="HgmA_C"/>
</dbReference>
<dbReference type="InterPro" id="IPR046452">
    <property type="entry name" value="HgmA_N"/>
</dbReference>
<dbReference type="InterPro" id="IPR005708">
    <property type="entry name" value="Homogentis_dOase"/>
</dbReference>
<dbReference type="InterPro" id="IPR022950">
    <property type="entry name" value="Homogentis_dOase_bac"/>
</dbReference>
<dbReference type="InterPro" id="IPR014710">
    <property type="entry name" value="RmlC-like_jellyroll"/>
</dbReference>
<dbReference type="InterPro" id="IPR011051">
    <property type="entry name" value="RmlC_Cupin_sf"/>
</dbReference>
<dbReference type="NCBIfam" id="TIGR01015">
    <property type="entry name" value="hmgA"/>
    <property type="match status" value="1"/>
</dbReference>
<dbReference type="PANTHER" id="PTHR11056">
    <property type="entry name" value="HOMOGENTISATE 1,2-DIOXYGENASE"/>
    <property type="match status" value="1"/>
</dbReference>
<dbReference type="PANTHER" id="PTHR11056:SF0">
    <property type="entry name" value="HOMOGENTISATE 1,2-DIOXYGENASE"/>
    <property type="match status" value="1"/>
</dbReference>
<dbReference type="Pfam" id="PF04209">
    <property type="entry name" value="HgmA_C"/>
    <property type="match status" value="1"/>
</dbReference>
<dbReference type="Pfam" id="PF20510">
    <property type="entry name" value="HgmA_N"/>
    <property type="match status" value="1"/>
</dbReference>
<dbReference type="SUPFAM" id="SSF51182">
    <property type="entry name" value="RmlC-like cupins"/>
    <property type="match status" value="1"/>
</dbReference>
<accession>Q13CD3</accession>
<gene>
    <name evidence="1" type="primary">hmgA</name>
    <name type="ordered locus">RPD_1018</name>
</gene>
<keyword id="KW-0223">Dioxygenase</keyword>
<keyword id="KW-0408">Iron</keyword>
<keyword id="KW-0479">Metal-binding</keyword>
<keyword id="KW-0560">Oxidoreductase</keyword>
<keyword id="KW-0585">Phenylalanine catabolism</keyword>
<keyword id="KW-0828">Tyrosine catabolism</keyword>
<organism>
    <name type="scientific">Rhodopseudomonas palustris (strain BisB5)</name>
    <dbReference type="NCBI Taxonomy" id="316057"/>
    <lineage>
        <taxon>Bacteria</taxon>
        <taxon>Pseudomonadati</taxon>
        <taxon>Pseudomonadota</taxon>
        <taxon>Alphaproteobacteria</taxon>
        <taxon>Hyphomicrobiales</taxon>
        <taxon>Nitrobacteraceae</taxon>
        <taxon>Rhodopseudomonas</taxon>
    </lineage>
</organism>
<name>HGD_RHOPS</name>
<proteinExistence type="inferred from homology"/>
<comment type="function">
    <text evidence="1">Involved in the catabolism of homogentisate (2,5-dihydroxyphenylacetate or 2,5-OH-PhAc), a central intermediate in the degradation of phenylalanine and tyrosine. Catalyzes the oxidative ring cleavage of the aromatic ring of homogentisate to yield maleylacetoacetate.</text>
</comment>
<comment type="catalytic activity">
    <reaction evidence="1">
        <text>homogentisate + O2 = 4-maleylacetoacetate + H(+)</text>
        <dbReference type="Rhea" id="RHEA:15449"/>
        <dbReference type="ChEBI" id="CHEBI:15378"/>
        <dbReference type="ChEBI" id="CHEBI:15379"/>
        <dbReference type="ChEBI" id="CHEBI:16169"/>
        <dbReference type="ChEBI" id="CHEBI:17105"/>
        <dbReference type="EC" id="1.13.11.5"/>
    </reaction>
</comment>
<comment type="cofactor">
    <cofactor evidence="1">
        <name>Fe cation</name>
        <dbReference type="ChEBI" id="CHEBI:24875"/>
    </cofactor>
</comment>
<comment type="pathway">
    <text evidence="1">Amino-acid degradation; L-phenylalanine degradation; acetoacetate and fumarate from L-phenylalanine: step 4/6.</text>
</comment>
<comment type="subunit">
    <text evidence="1">Hexamer; dimer of trimers.</text>
</comment>
<comment type="similarity">
    <text evidence="1">Belongs to the homogentisate dioxygenase family.</text>
</comment>
<protein>
    <recommendedName>
        <fullName evidence="1">Homogentisate 1,2-dioxygenase</fullName>
        <shortName evidence="1">HGDO</shortName>
        <ecNumber evidence="1">1.13.11.5</ecNumber>
    </recommendedName>
    <alternativeName>
        <fullName evidence="1">Homogentisate oxygenase</fullName>
    </alternativeName>
    <alternativeName>
        <fullName evidence="1">Homogentisic acid oxidase</fullName>
    </alternativeName>
    <alternativeName>
        <fullName evidence="1">Homogentisicase</fullName>
    </alternativeName>
</protein>
<feature type="chain" id="PRO_1000019543" description="Homogentisate 1,2-dioxygenase">
    <location>
        <begin position="1"/>
        <end position="448"/>
    </location>
</feature>
<feature type="active site" description="Proton acceptor" evidence="1">
    <location>
        <position position="303"/>
    </location>
</feature>
<feature type="binding site" evidence="1">
    <location>
        <position position="346"/>
    </location>
    <ligand>
        <name>Fe cation</name>
        <dbReference type="ChEBI" id="CHEBI:24875"/>
    </ligand>
</feature>
<feature type="binding site" evidence="1">
    <location>
        <position position="352"/>
    </location>
    <ligand>
        <name>Fe cation</name>
        <dbReference type="ChEBI" id="CHEBI:24875"/>
    </ligand>
</feature>
<feature type="binding site" evidence="1">
    <location>
        <position position="361"/>
    </location>
    <ligand>
        <name>homogentisate</name>
        <dbReference type="ChEBI" id="CHEBI:16169"/>
    </ligand>
</feature>
<feature type="binding site" evidence="1">
    <location>
        <position position="382"/>
    </location>
    <ligand>
        <name>Fe cation</name>
        <dbReference type="ChEBI" id="CHEBI:24875"/>
    </ligand>
</feature>
<feature type="binding site" evidence="1">
    <location>
        <position position="382"/>
    </location>
    <ligand>
        <name>homogentisate</name>
        <dbReference type="ChEBI" id="CHEBI:16169"/>
    </ligand>
</feature>
<reference key="1">
    <citation type="submission" date="2006-03" db="EMBL/GenBank/DDBJ databases">
        <title>Complete sequence of Rhodopseudomonas palustris BisB5.</title>
        <authorList>
            <consortium name="US DOE Joint Genome Institute"/>
            <person name="Copeland A."/>
            <person name="Lucas S."/>
            <person name="Lapidus A."/>
            <person name="Barry K."/>
            <person name="Detter J.C."/>
            <person name="Glavina del Rio T."/>
            <person name="Hammon N."/>
            <person name="Israni S."/>
            <person name="Dalin E."/>
            <person name="Tice H."/>
            <person name="Pitluck S."/>
            <person name="Chain P."/>
            <person name="Malfatti S."/>
            <person name="Shin M."/>
            <person name="Vergez L."/>
            <person name="Schmutz J."/>
            <person name="Larimer F."/>
            <person name="Land M."/>
            <person name="Hauser L."/>
            <person name="Pelletier D.A."/>
            <person name="Kyrpides N."/>
            <person name="Lykidis A."/>
            <person name="Oda Y."/>
            <person name="Harwood C.S."/>
            <person name="Richardson P."/>
        </authorList>
    </citation>
    <scope>NUCLEOTIDE SEQUENCE [LARGE SCALE GENOMIC DNA]</scope>
    <source>
        <strain>BisB5</strain>
    </source>
</reference>
<sequence length="448" mass="49546">MNVNAAPEIVGRASQGVTPGYMSGFGNSFETEALPGALPVGRNSPQRAAYGLYAEQLSGSPFTAPRGANERSWLYRIRPSVKHSGRFAKADMGLWRSAPCLEHDMPIAQLRWDAPPMPTEEVTFVQGVRTMTTAGDVNTQAGMAAHMYLISRSMVDQHFYNADGELMFVPQQGRLRLVTEFGVIAIEPAEIAVIPRGVKFRVELVDGPARGYLCENYGGAFTLPERGPIGANCLANSRDFLTPVASYEDKDTPTELFVKWGGALWRTSLPHSPIDVVAWHGNYAPYKYDLRTFSPVGAIGFDHPDPSIFTVLTSPSETAGTANIDFVIFPERWMVAENTFRPPWYHMNIMSEFMGLIYGVYDAKPQGFAPGGASLHNMMLPHGPDREAFDHASNGELKPVKLTGTMAFMLETRYPQRVTEYAATADTLQDDYADCWRGLEKRFDPSRP</sequence>
<evidence type="ECO:0000255" key="1">
    <source>
        <dbReference type="HAMAP-Rule" id="MF_00334"/>
    </source>
</evidence>